<reference key="1">
    <citation type="journal article" date="1994" name="Nucleic Acids Res.">
        <title>The gene encoding topoisomerase II from Plasmodium falciparum.</title>
        <authorList>
            <person name="Cheesman S."/>
            <person name="McAleese S."/>
            <person name="Goman M."/>
            <person name="Johnson D."/>
            <person name="Horrocks P."/>
            <person name="Ridley R.G."/>
            <person name="Kilbey B.J."/>
        </authorList>
    </citation>
    <scope>NUCLEOTIDE SEQUENCE [GENOMIC DNA]</scope>
</reference>
<evidence type="ECO:0000250" key="1"/>
<evidence type="ECO:0000250" key="2">
    <source>
        <dbReference type="UniProtKB" id="P11388"/>
    </source>
</evidence>
<evidence type="ECO:0000255" key="3">
    <source>
        <dbReference type="PROSITE-ProRule" id="PRU00995"/>
    </source>
</evidence>
<evidence type="ECO:0000255" key="4">
    <source>
        <dbReference type="PROSITE-ProRule" id="PRU01384"/>
    </source>
</evidence>
<evidence type="ECO:0000256" key="5">
    <source>
        <dbReference type="SAM" id="MobiDB-lite"/>
    </source>
</evidence>
<evidence type="ECO:0000305" key="6"/>
<accession>P41001</accession>
<gene>
    <name type="primary">TOP2</name>
</gene>
<proteinExistence type="inferred from homology"/>
<sequence length="1398" mass="161029">MAKNKTIEERYQKKSQIEHILLRPDTYIGSVEMHTQLLWVWNKEKNRMVQKNITYVPGLYKIFDEIIVNAADVKAREKEKSENPMTCIKIEINKENKRISVYNDGEGIPVDIHKEMNIYVPHMIFGELLTSDNYDDAEDRITGGRNGFGAKLTNIFSKEFIVQCGDSSRKKEFKMTWSDNMSKFSEPHIKNYNGKDYVKVTFKPDLNKFGMTEMDDDIESLLFKRVYDLAGTCSVRVYLNGQRLAVKDFKSYVDLYLKDNSNDNKNNKGQNDNNNNNNNNNDENANQNNDNLDVSLSNEPADGTPTKNNNNNNNNNDEDEIVKIHEKQHRWEIVVSKSDGSQFQQVSFVNSICTTKGGSHVNYIVEQLLSSLSKKANAKNKGGMEIKSGHIRNHLWVFVNCLIVNPTFDSQTKETLTTKPVKFGSKCILSDKTINNVLKSPILSNILLWAQAKAQVELKKKMKAGSSKARERIIGIPKLEDANDAGSKYSQECTLILTEGDSAKTSCLAGLSIVGRDKYGVFPLKGKLLNVRDASFKQLMDNKEIQNIFRIMGLDITDKNKDDIKGLRYGSLMIMTDQDYDGSHIKGLLINMIHKFWPSLLKHKGFLSEFVTPIVKVQKGSQEYSFFTIAEYEQWKENTNLLGWKIKYYKGLGTSTDREFKQYFSDIKNHKIMFLWTGDRDGDSIDMAFSKKRIEDRKLWLQNFILGSYVDHKEKDLSYYDFVNKELIYYSRYDTERSIPNIMDGWKPGQRKVLYGCFKRNLRNECKVAQLVGYIAEHSAYHHHGESSLQQTIINMAQTFVGSNNINFLEPCGQFGSRKEGGKDASAARYIFTKLASSTRSIFNEYDDPILKYLNEEGQKIEPQYYIPVIPTILVNGCEGIGTGYSSFIPNYNYKDIIDNIKRYINKEPLIPMVPWYKDFKGRIESNGKTGYETIGIINKIDNDTLEITELPIKKWTQDYKEFLEELLTDEKHQLILDYIDNSSHEDICFTIKMDPAKLQKAEEEGLEKVFKLKSTLTTTNMTLFDPNLKLQRYSTELDILKEFCYQRLKAYENRKSYLISKLEKEKRIISNKTKFILAIVNNELIVNKKKKKVLVEELYRKGYDPYKDINKIKKEEIFEQELLDAADNPEDNEEIIAGITVKDYDYLLSMPIFSLTLEKVEDLLTQLKEKERELEILRNITVETMWLKDIEKVEEAIEFQRNVELSNREESNKFKVARKQGPSSMKKKKKKKKLSSDEESEGGDTSDSSEFLVNTLNIKKNTNKKTTTSSNNVNNSKKRLRKADDLNSNELDNTLSVSKTFDDNNNLTDNTPLINRLNDENNEFSSNNVDNKSTNKNSRKKKPKIADSTNDNNSELNSSIQINDNVNDDINITISPNKTINVNEFSSIKNKLLELGI</sequence>
<organism>
    <name type="scientific">Plasmodium falciparum (isolate K1 / Thailand)</name>
    <dbReference type="NCBI Taxonomy" id="5839"/>
    <lineage>
        <taxon>Eukaryota</taxon>
        <taxon>Sar</taxon>
        <taxon>Alveolata</taxon>
        <taxon>Apicomplexa</taxon>
        <taxon>Aconoidasida</taxon>
        <taxon>Haemosporida</taxon>
        <taxon>Plasmodiidae</taxon>
        <taxon>Plasmodium</taxon>
        <taxon>Plasmodium (Laverania)</taxon>
    </lineage>
</organism>
<comment type="function">
    <text>Control of topological states of DNA by transient breakage and subsequent rejoining of DNA strands. Topoisomerase II makes double-strand breaks.</text>
</comment>
<comment type="catalytic activity">
    <reaction evidence="3">
        <text>ATP-dependent breakage, passage and rejoining of double-stranded DNA.</text>
        <dbReference type="EC" id="5.6.2.2"/>
    </reaction>
</comment>
<comment type="cofactor">
    <cofactor evidence="3">
        <name>Mg(2+)</name>
        <dbReference type="ChEBI" id="CHEBI:18420"/>
    </cofactor>
    <cofactor evidence="3">
        <name>Mn(2+)</name>
        <dbReference type="ChEBI" id="CHEBI:29035"/>
    </cofactor>
    <cofactor evidence="3">
        <name>Ca(2+)</name>
        <dbReference type="ChEBI" id="CHEBI:29108"/>
    </cofactor>
    <text evidence="3">Binds two Mg(2+) per subunit. The magnesium ions form salt bridges with both the protein and the DNA. Can also accept other divalent metal cations, such as Mn(2+) or Ca(2+).</text>
</comment>
<comment type="subunit">
    <text evidence="1">Homodimer.</text>
</comment>
<comment type="subcellular location">
    <subcellularLocation>
        <location>Nucleus</location>
    </subcellularLocation>
</comment>
<comment type="miscellaneous">
    <text>Eukaryotic topoisomerase I and II can relax both negative and positive supercoils, whereas prokaryotic enzymes relax only negative supercoils.</text>
</comment>
<comment type="similarity">
    <text evidence="6">Belongs to the type II topoisomerase family.</text>
</comment>
<name>TOP2_PLAFK</name>
<keyword id="KW-0067">ATP-binding</keyword>
<keyword id="KW-0238">DNA-binding</keyword>
<keyword id="KW-0413">Isomerase</keyword>
<keyword id="KW-0460">Magnesium</keyword>
<keyword id="KW-0479">Metal-binding</keyword>
<keyword id="KW-0547">Nucleotide-binding</keyword>
<keyword id="KW-0539">Nucleus</keyword>
<keyword id="KW-0799">Topoisomerase</keyword>
<dbReference type="EC" id="5.6.2.2" evidence="3"/>
<dbReference type="EMBL" id="X79345">
    <property type="status" value="NOT_ANNOTATED_CDS"/>
    <property type="molecule type" value="Genomic_DNA"/>
</dbReference>
<dbReference type="SMR" id="P41001"/>
<dbReference type="ChEMBL" id="CHEMBL1741266"/>
<dbReference type="GO" id="GO:0005634">
    <property type="term" value="C:nucleus"/>
    <property type="evidence" value="ECO:0007669"/>
    <property type="project" value="UniProtKB-SubCell"/>
</dbReference>
<dbReference type="GO" id="GO:0005524">
    <property type="term" value="F:ATP binding"/>
    <property type="evidence" value="ECO:0007669"/>
    <property type="project" value="UniProtKB-KW"/>
</dbReference>
<dbReference type="GO" id="GO:0003677">
    <property type="term" value="F:DNA binding"/>
    <property type="evidence" value="ECO:0007669"/>
    <property type="project" value="UniProtKB-KW"/>
</dbReference>
<dbReference type="GO" id="GO:0003918">
    <property type="term" value="F:DNA topoisomerase type II (double strand cut, ATP-hydrolyzing) activity"/>
    <property type="evidence" value="ECO:0007669"/>
    <property type="project" value="UniProtKB-EC"/>
</dbReference>
<dbReference type="GO" id="GO:0046872">
    <property type="term" value="F:metal ion binding"/>
    <property type="evidence" value="ECO:0007669"/>
    <property type="project" value="UniProtKB-KW"/>
</dbReference>
<dbReference type="GO" id="GO:0006265">
    <property type="term" value="P:DNA topological change"/>
    <property type="evidence" value="ECO:0007669"/>
    <property type="project" value="InterPro"/>
</dbReference>
<dbReference type="GO" id="GO:0000712">
    <property type="term" value="P:resolution of meiotic recombination intermediates"/>
    <property type="evidence" value="ECO:0007669"/>
    <property type="project" value="TreeGrafter"/>
</dbReference>
<dbReference type="GO" id="GO:0000819">
    <property type="term" value="P:sister chromatid segregation"/>
    <property type="evidence" value="ECO:0007669"/>
    <property type="project" value="TreeGrafter"/>
</dbReference>
<dbReference type="CDD" id="cd16930">
    <property type="entry name" value="HATPase_TopII-like"/>
    <property type="match status" value="1"/>
</dbReference>
<dbReference type="CDD" id="cd00187">
    <property type="entry name" value="TOP4c"/>
    <property type="match status" value="1"/>
</dbReference>
<dbReference type="CDD" id="cd03481">
    <property type="entry name" value="TopoIIA_Trans_ScTopoIIA"/>
    <property type="match status" value="1"/>
</dbReference>
<dbReference type="CDD" id="cd03365">
    <property type="entry name" value="TOPRIM_TopoIIA"/>
    <property type="match status" value="1"/>
</dbReference>
<dbReference type="FunFam" id="1.10.268.10:FF:000004">
    <property type="entry name" value="DNA topoisomerase 2"/>
    <property type="match status" value="1"/>
</dbReference>
<dbReference type="FunFam" id="3.30.1360.40:FF:000003">
    <property type="entry name" value="DNA topoisomerase 2"/>
    <property type="match status" value="1"/>
</dbReference>
<dbReference type="FunFam" id="3.30.1490.30:FF:000001">
    <property type="entry name" value="DNA topoisomerase 2"/>
    <property type="match status" value="1"/>
</dbReference>
<dbReference type="FunFam" id="3.30.230.10:FF:000008">
    <property type="entry name" value="DNA topoisomerase 2"/>
    <property type="match status" value="1"/>
</dbReference>
<dbReference type="FunFam" id="3.30.565.10:FF:000004">
    <property type="entry name" value="DNA topoisomerase 2"/>
    <property type="match status" value="1"/>
</dbReference>
<dbReference type="FunFam" id="3.40.50.670:FF:000001">
    <property type="entry name" value="DNA topoisomerase 2"/>
    <property type="match status" value="2"/>
</dbReference>
<dbReference type="FunFam" id="3.90.199.10:FF:000002">
    <property type="entry name" value="DNA topoisomerase 2"/>
    <property type="match status" value="1"/>
</dbReference>
<dbReference type="Gene3D" id="3.30.1360.40">
    <property type="match status" value="1"/>
</dbReference>
<dbReference type="Gene3D" id="3.30.1490.30">
    <property type="match status" value="1"/>
</dbReference>
<dbReference type="Gene3D" id="3.30.230.10">
    <property type="match status" value="1"/>
</dbReference>
<dbReference type="Gene3D" id="3.40.50.670">
    <property type="match status" value="1"/>
</dbReference>
<dbReference type="Gene3D" id="3.30.565.10">
    <property type="entry name" value="Histidine kinase-like ATPase, C-terminal domain"/>
    <property type="match status" value="1"/>
</dbReference>
<dbReference type="Gene3D" id="3.90.199.10">
    <property type="entry name" value="Topoisomerase II, domain 5"/>
    <property type="match status" value="1"/>
</dbReference>
<dbReference type="Gene3D" id="1.10.268.10">
    <property type="entry name" value="Topoisomerase, domain 3"/>
    <property type="match status" value="1"/>
</dbReference>
<dbReference type="InterPro" id="IPR050634">
    <property type="entry name" value="DNA_Topoisomerase_II"/>
</dbReference>
<dbReference type="InterPro" id="IPR036890">
    <property type="entry name" value="HATPase_C_sf"/>
</dbReference>
<dbReference type="InterPro" id="IPR020568">
    <property type="entry name" value="Ribosomal_Su5_D2-typ_SF"/>
</dbReference>
<dbReference type="InterPro" id="IPR014721">
    <property type="entry name" value="Ribsml_uS5_D2-typ_fold_subgr"/>
</dbReference>
<dbReference type="InterPro" id="IPR001241">
    <property type="entry name" value="Topo_IIA"/>
</dbReference>
<dbReference type="InterPro" id="IPR013760">
    <property type="entry name" value="Topo_IIA-like_dom_sf"/>
</dbReference>
<dbReference type="InterPro" id="IPR013758">
    <property type="entry name" value="Topo_IIA_A/C_ab"/>
</dbReference>
<dbReference type="InterPro" id="IPR013757">
    <property type="entry name" value="Topo_IIA_A_a_sf"/>
</dbReference>
<dbReference type="InterPro" id="IPR013759">
    <property type="entry name" value="Topo_IIA_B_C"/>
</dbReference>
<dbReference type="InterPro" id="IPR013506">
    <property type="entry name" value="Topo_IIA_bsu_dom2"/>
</dbReference>
<dbReference type="InterPro" id="IPR002205">
    <property type="entry name" value="Topo_IIA_dom_A"/>
</dbReference>
<dbReference type="InterPro" id="IPR001154">
    <property type="entry name" value="TopoII_euk"/>
</dbReference>
<dbReference type="InterPro" id="IPR018522">
    <property type="entry name" value="TopoIIA_CS"/>
</dbReference>
<dbReference type="InterPro" id="IPR031660">
    <property type="entry name" value="TOPRIM_C"/>
</dbReference>
<dbReference type="InterPro" id="IPR006171">
    <property type="entry name" value="TOPRIM_dom"/>
</dbReference>
<dbReference type="InterPro" id="IPR034157">
    <property type="entry name" value="TOPRIM_TopoII"/>
</dbReference>
<dbReference type="PANTHER" id="PTHR10169:SF38">
    <property type="entry name" value="DNA TOPOISOMERASE 2"/>
    <property type="match status" value="1"/>
</dbReference>
<dbReference type="PANTHER" id="PTHR10169">
    <property type="entry name" value="DNA TOPOISOMERASE/GYRASE"/>
    <property type="match status" value="1"/>
</dbReference>
<dbReference type="Pfam" id="PF00204">
    <property type="entry name" value="DNA_gyraseB"/>
    <property type="match status" value="1"/>
</dbReference>
<dbReference type="Pfam" id="PF00521">
    <property type="entry name" value="DNA_topoisoIV"/>
    <property type="match status" value="1"/>
</dbReference>
<dbReference type="Pfam" id="PF02518">
    <property type="entry name" value="HATPase_c"/>
    <property type="match status" value="1"/>
</dbReference>
<dbReference type="Pfam" id="PF01751">
    <property type="entry name" value="Toprim"/>
    <property type="match status" value="1"/>
</dbReference>
<dbReference type="Pfam" id="PF16898">
    <property type="entry name" value="TOPRIM_C"/>
    <property type="match status" value="1"/>
</dbReference>
<dbReference type="PRINTS" id="PR01158">
    <property type="entry name" value="TOPISMRASEII"/>
</dbReference>
<dbReference type="PRINTS" id="PR00418">
    <property type="entry name" value="TPI2FAMILY"/>
</dbReference>
<dbReference type="SMART" id="SM00433">
    <property type="entry name" value="TOP2c"/>
    <property type="match status" value="1"/>
</dbReference>
<dbReference type="SMART" id="SM00434">
    <property type="entry name" value="TOP4c"/>
    <property type="match status" value="1"/>
</dbReference>
<dbReference type="SUPFAM" id="SSF55874">
    <property type="entry name" value="ATPase domain of HSP90 chaperone/DNA topoisomerase II/histidine kinase"/>
    <property type="match status" value="1"/>
</dbReference>
<dbReference type="SUPFAM" id="SSF54211">
    <property type="entry name" value="Ribosomal protein S5 domain 2-like"/>
    <property type="match status" value="1"/>
</dbReference>
<dbReference type="SUPFAM" id="SSF56719">
    <property type="entry name" value="Type II DNA topoisomerase"/>
    <property type="match status" value="1"/>
</dbReference>
<dbReference type="PROSITE" id="PS52040">
    <property type="entry name" value="TOPO_IIA"/>
    <property type="match status" value="1"/>
</dbReference>
<dbReference type="PROSITE" id="PS00177">
    <property type="entry name" value="TOPOISOMERASE_II"/>
    <property type="match status" value="1"/>
</dbReference>
<dbReference type="PROSITE" id="PS50880">
    <property type="entry name" value="TOPRIM"/>
    <property type="match status" value="1"/>
</dbReference>
<protein>
    <recommendedName>
        <fullName>DNA topoisomerase 2</fullName>
        <ecNumber evidence="3">5.6.2.2</ecNumber>
    </recommendedName>
    <alternativeName>
        <fullName>DNA topoisomerase II</fullName>
    </alternativeName>
</protein>
<feature type="chain" id="PRO_0000145377" description="DNA topoisomerase 2">
    <location>
        <begin position="1"/>
        <end position="1398"/>
    </location>
</feature>
<feature type="domain" description="Toprim" evidence="3">
    <location>
        <begin position="493"/>
        <end position="608"/>
    </location>
</feature>
<feature type="domain" description="Topo IIA-type catalytic" evidence="4">
    <location>
        <begin position="739"/>
        <end position="1191"/>
    </location>
</feature>
<feature type="region of interest" description="Disordered" evidence="5">
    <location>
        <begin position="260"/>
        <end position="317"/>
    </location>
</feature>
<feature type="region of interest" description="Interaction with DNA" evidence="2">
    <location>
        <begin position="1012"/>
        <end position="1021"/>
    </location>
</feature>
<feature type="region of interest" description="Disordered" evidence="5">
    <location>
        <begin position="1214"/>
        <end position="1250"/>
    </location>
</feature>
<feature type="region of interest" description="Disordered" evidence="5">
    <location>
        <begin position="1262"/>
        <end position="1361"/>
    </location>
</feature>
<feature type="compositionally biased region" description="Low complexity" evidence="5">
    <location>
        <begin position="267"/>
        <end position="291"/>
    </location>
</feature>
<feature type="compositionally biased region" description="Low complexity" evidence="5">
    <location>
        <begin position="1262"/>
        <end position="1276"/>
    </location>
</feature>
<feature type="compositionally biased region" description="Polar residues" evidence="5">
    <location>
        <begin position="1287"/>
        <end position="1300"/>
    </location>
</feature>
<feature type="compositionally biased region" description="Polar residues" evidence="5">
    <location>
        <begin position="1348"/>
        <end position="1357"/>
    </location>
</feature>
<feature type="active site" description="O-(5'-phospho-DNA)-tyrosine intermediate" evidence="4">
    <location>
        <position position="830"/>
    </location>
</feature>
<feature type="binding site" evidence="2">
    <location>
        <position position="69"/>
    </location>
    <ligand>
        <name>ATP</name>
        <dbReference type="ChEBI" id="CHEBI:30616"/>
    </ligand>
</feature>
<feature type="binding site" evidence="2">
    <location>
        <position position="103"/>
    </location>
    <ligand>
        <name>ATP</name>
        <dbReference type="ChEBI" id="CHEBI:30616"/>
    </ligand>
</feature>
<feature type="binding site" evidence="2">
    <location>
        <begin position="131"/>
        <end position="133"/>
    </location>
    <ligand>
        <name>ATP</name>
        <dbReference type="ChEBI" id="CHEBI:30616"/>
    </ligand>
</feature>
<feature type="binding site" evidence="2">
    <location>
        <begin position="144"/>
        <end position="151"/>
    </location>
    <ligand>
        <name>ATP</name>
        <dbReference type="ChEBI" id="CHEBI:30616"/>
    </ligand>
</feature>
<feature type="binding site" evidence="2">
    <location>
        <begin position="411"/>
        <end position="413"/>
    </location>
    <ligand>
        <name>ATP</name>
        <dbReference type="ChEBI" id="CHEBI:30616"/>
    </ligand>
</feature>
<feature type="binding site" evidence="3">
    <location>
        <position position="499"/>
    </location>
    <ligand>
        <name>Mg(2+)</name>
        <dbReference type="ChEBI" id="CHEBI:18420"/>
        <label>1</label>
        <note>catalytic</note>
    </ligand>
</feature>
<feature type="binding site" evidence="3">
    <location>
        <position position="577"/>
    </location>
    <ligand>
        <name>Mg(2+)</name>
        <dbReference type="ChEBI" id="CHEBI:18420"/>
        <label>1</label>
        <note>catalytic</note>
    </ligand>
</feature>
<feature type="binding site" evidence="3">
    <location>
        <position position="577"/>
    </location>
    <ligand>
        <name>Mg(2+)</name>
        <dbReference type="ChEBI" id="CHEBI:18420"/>
        <label>2</label>
    </ligand>
</feature>
<feature type="binding site" evidence="3">
    <location>
        <position position="579"/>
    </location>
    <ligand>
        <name>Mg(2+)</name>
        <dbReference type="ChEBI" id="CHEBI:18420"/>
        <label>2</label>
    </ligand>
</feature>
<feature type="site" description="Interaction with DNA" evidence="3">
    <location>
        <position position="527"/>
    </location>
</feature>
<feature type="site" description="Interaction with DNA" evidence="3">
    <location>
        <position position="530"/>
    </location>
</feature>
<feature type="site" description="Interaction with DNA" evidence="3">
    <location>
        <position position="697"/>
    </location>
</feature>
<feature type="site" description="Interaction with DNA" evidence="3">
    <location>
        <position position="698"/>
    </location>
</feature>
<feature type="site" description="Interaction with DNA" evidence="3">
    <location>
        <position position="747"/>
    </location>
</feature>
<feature type="site" description="Interaction with DNA" evidence="3">
    <location>
        <position position="781"/>
    </location>
</feature>
<feature type="site" description="Interaction with DNA" evidence="3">
    <location>
        <position position="788"/>
    </location>
</feature>
<feature type="site" description="Transition state stabilizer" evidence="1">
    <location>
        <position position="829"/>
    </location>
</feature>
<feature type="site" description="Important for DNA bending; intercalates between base pairs of target DNA" evidence="1">
    <location>
        <position position="881"/>
    </location>
</feature>
<feature type="site" description="Interaction with DNA" evidence="2">
    <location>
        <position position="956"/>
    </location>
</feature>